<protein>
    <recommendedName>
        <fullName evidence="1">Small ribosomal subunit protein uS11</fullName>
    </recommendedName>
    <alternativeName>
        <fullName evidence="2">30S ribosomal protein S11</fullName>
    </alternativeName>
</protein>
<organism>
    <name type="scientific">Desulforamulus reducens (strain ATCC BAA-1160 / DSM 100696 / MI-1)</name>
    <name type="common">Desulfotomaculum reducens</name>
    <dbReference type="NCBI Taxonomy" id="349161"/>
    <lineage>
        <taxon>Bacteria</taxon>
        <taxon>Bacillati</taxon>
        <taxon>Bacillota</taxon>
        <taxon>Clostridia</taxon>
        <taxon>Eubacteriales</taxon>
        <taxon>Peptococcaceae</taxon>
        <taxon>Desulforamulus</taxon>
    </lineage>
</organism>
<reference key="1">
    <citation type="submission" date="2007-03" db="EMBL/GenBank/DDBJ databases">
        <title>Complete sequence of Desulfotomaculum reducens MI-1.</title>
        <authorList>
            <consortium name="US DOE Joint Genome Institute"/>
            <person name="Copeland A."/>
            <person name="Lucas S."/>
            <person name="Lapidus A."/>
            <person name="Barry K."/>
            <person name="Detter J.C."/>
            <person name="Glavina del Rio T."/>
            <person name="Hammon N."/>
            <person name="Israni S."/>
            <person name="Dalin E."/>
            <person name="Tice H."/>
            <person name="Pitluck S."/>
            <person name="Sims D."/>
            <person name="Brettin T."/>
            <person name="Bruce D."/>
            <person name="Han C."/>
            <person name="Tapia R."/>
            <person name="Schmutz J."/>
            <person name="Larimer F."/>
            <person name="Land M."/>
            <person name="Hauser L."/>
            <person name="Kyrpides N."/>
            <person name="Kim E."/>
            <person name="Tebo B.M."/>
            <person name="Richardson P."/>
        </authorList>
    </citation>
    <scope>NUCLEOTIDE SEQUENCE [LARGE SCALE GENOMIC DNA]</scope>
    <source>
        <strain>ATCC BAA-1160 / DSM 100696 / MI-1</strain>
    </source>
</reference>
<evidence type="ECO:0000255" key="1">
    <source>
        <dbReference type="HAMAP-Rule" id="MF_01310"/>
    </source>
</evidence>
<evidence type="ECO:0000305" key="2"/>
<dbReference type="EMBL" id="CP000612">
    <property type="protein sequence ID" value="ABO48790.1"/>
    <property type="molecule type" value="Genomic_DNA"/>
</dbReference>
<dbReference type="RefSeq" id="WP_011876628.1">
    <property type="nucleotide sequence ID" value="NC_009253.1"/>
</dbReference>
<dbReference type="SMR" id="A4J137"/>
<dbReference type="STRING" id="349161.Dred_0241"/>
<dbReference type="KEGG" id="drm:Dred_0241"/>
<dbReference type="eggNOG" id="COG0100">
    <property type="taxonomic scope" value="Bacteria"/>
</dbReference>
<dbReference type="HOGENOM" id="CLU_072439_5_0_9"/>
<dbReference type="OrthoDB" id="9806415at2"/>
<dbReference type="Proteomes" id="UP000001556">
    <property type="component" value="Chromosome"/>
</dbReference>
<dbReference type="GO" id="GO:1990904">
    <property type="term" value="C:ribonucleoprotein complex"/>
    <property type="evidence" value="ECO:0007669"/>
    <property type="project" value="UniProtKB-KW"/>
</dbReference>
<dbReference type="GO" id="GO:0005840">
    <property type="term" value="C:ribosome"/>
    <property type="evidence" value="ECO:0007669"/>
    <property type="project" value="UniProtKB-KW"/>
</dbReference>
<dbReference type="GO" id="GO:0019843">
    <property type="term" value="F:rRNA binding"/>
    <property type="evidence" value="ECO:0007669"/>
    <property type="project" value="UniProtKB-UniRule"/>
</dbReference>
<dbReference type="GO" id="GO:0003735">
    <property type="term" value="F:structural constituent of ribosome"/>
    <property type="evidence" value="ECO:0007669"/>
    <property type="project" value="InterPro"/>
</dbReference>
<dbReference type="GO" id="GO:0006412">
    <property type="term" value="P:translation"/>
    <property type="evidence" value="ECO:0007669"/>
    <property type="project" value="UniProtKB-UniRule"/>
</dbReference>
<dbReference type="FunFam" id="3.30.420.80:FF:000001">
    <property type="entry name" value="30S ribosomal protein S11"/>
    <property type="match status" value="1"/>
</dbReference>
<dbReference type="Gene3D" id="3.30.420.80">
    <property type="entry name" value="Ribosomal protein S11"/>
    <property type="match status" value="1"/>
</dbReference>
<dbReference type="HAMAP" id="MF_01310">
    <property type="entry name" value="Ribosomal_uS11"/>
    <property type="match status" value="1"/>
</dbReference>
<dbReference type="InterPro" id="IPR001971">
    <property type="entry name" value="Ribosomal_uS11"/>
</dbReference>
<dbReference type="InterPro" id="IPR019981">
    <property type="entry name" value="Ribosomal_uS11_bac-type"/>
</dbReference>
<dbReference type="InterPro" id="IPR018102">
    <property type="entry name" value="Ribosomal_uS11_CS"/>
</dbReference>
<dbReference type="InterPro" id="IPR036967">
    <property type="entry name" value="Ribosomal_uS11_sf"/>
</dbReference>
<dbReference type="NCBIfam" id="NF003698">
    <property type="entry name" value="PRK05309.1"/>
    <property type="match status" value="1"/>
</dbReference>
<dbReference type="NCBIfam" id="TIGR03632">
    <property type="entry name" value="uS11_bact"/>
    <property type="match status" value="1"/>
</dbReference>
<dbReference type="PANTHER" id="PTHR11759">
    <property type="entry name" value="40S RIBOSOMAL PROTEIN S14/30S RIBOSOMAL PROTEIN S11"/>
    <property type="match status" value="1"/>
</dbReference>
<dbReference type="Pfam" id="PF00411">
    <property type="entry name" value="Ribosomal_S11"/>
    <property type="match status" value="1"/>
</dbReference>
<dbReference type="PIRSF" id="PIRSF002131">
    <property type="entry name" value="Ribosomal_S11"/>
    <property type="match status" value="1"/>
</dbReference>
<dbReference type="SUPFAM" id="SSF53137">
    <property type="entry name" value="Translational machinery components"/>
    <property type="match status" value="1"/>
</dbReference>
<dbReference type="PROSITE" id="PS00054">
    <property type="entry name" value="RIBOSOMAL_S11"/>
    <property type="match status" value="1"/>
</dbReference>
<comment type="function">
    <text evidence="1">Located on the platform of the 30S subunit, it bridges several disparate RNA helices of the 16S rRNA. Forms part of the Shine-Dalgarno cleft in the 70S ribosome.</text>
</comment>
<comment type="subunit">
    <text evidence="1">Part of the 30S ribosomal subunit. Interacts with proteins S7 and S18. Binds to IF-3.</text>
</comment>
<comment type="similarity">
    <text evidence="1">Belongs to the universal ribosomal protein uS11 family.</text>
</comment>
<name>RS11_DESRM</name>
<feature type="chain" id="PRO_0000323339" description="Small ribosomal subunit protein uS11">
    <location>
        <begin position="1"/>
        <end position="129"/>
    </location>
</feature>
<keyword id="KW-1185">Reference proteome</keyword>
<keyword id="KW-0687">Ribonucleoprotein</keyword>
<keyword id="KW-0689">Ribosomal protein</keyword>
<keyword id="KW-0694">RNA-binding</keyword>
<keyword id="KW-0699">rRNA-binding</keyword>
<proteinExistence type="inferred from homology"/>
<sequence>MARRQVRTKRKDKKNVEQGVAHIKSTFNNTIVTITDLKGNTLGWSSAGQVGFKGSRKSTPFAAQMAAEAAAKDAMEHGLKEVEVTVKGPGSGREAAIRSLQAAGLEVNMIKDVTPIPHNGCRPPKRRRV</sequence>
<gene>
    <name evidence="1" type="primary">rpsK</name>
    <name type="ordered locus">Dred_0241</name>
</gene>
<accession>A4J137</accession>